<name>NDHI_SYNPW</name>
<reference key="1">
    <citation type="submission" date="2006-05" db="EMBL/GenBank/DDBJ databases">
        <authorList>
            <consortium name="Genoscope"/>
        </authorList>
    </citation>
    <scope>NUCLEOTIDE SEQUENCE [LARGE SCALE GENOMIC DNA]</scope>
    <source>
        <strain>WH7803</strain>
    </source>
</reference>
<accession>A5GP51</accession>
<dbReference type="EC" id="7.1.1.-" evidence="1"/>
<dbReference type="EMBL" id="CT971583">
    <property type="protein sequence ID" value="CAK24716.1"/>
    <property type="molecule type" value="Genomic_DNA"/>
</dbReference>
<dbReference type="SMR" id="A5GP51"/>
<dbReference type="STRING" id="32051.SynWH7803_2290"/>
<dbReference type="KEGG" id="syx:SynWH7803_2290"/>
<dbReference type="eggNOG" id="COG1143">
    <property type="taxonomic scope" value="Bacteria"/>
</dbReference>
<dbReference type="HOGENOM" id="CLU_122804_0_0_3"/>
<dbReference type="OrthoDB" id="9798098at2"/>
<dbReference type="Proteomes" id="UP000001566">
    <property type="component" value="Chromosome"/>
</dbReference>
<dbReference type="GO" id="GO:0031676">
    <property type="term" value="C:plasma membrane-derived thylakoid membrane"/>
    <property type="evidence" value="ECO:0007669"/>
    <property type="project" value="UniProtKB-SubCell"/>
</dbReference>
<dbReference type="GO" id="GO:0051539">
    <property type="term" value="F:4 iron, 4 sulfur cluster binding"/>
    <property type="evidence" value="ECO:0007669"/>
    <property type="project" value="UniProtKB-KW"/>
</dbReference>
<dbReference type="GO" id="GO:0005506">
    <property type="term" value="F:iron ion binding"/>
    <property type="evidence" value="ECO:0007669"/>
    <property type="project" value="UniProtKB-UniRule"/>
</dbReference>
<dbReference type="GO" id="GO:0008137">
    <property type="term" value="F:NADH dehydrogenase (ubiquinone) activity"/>
    <property type="evidence" value="ECO:0007669"/>
    <property type="project" value="InterPro"/>
</dbReference>
<dbReference type="GO" id="GO:0048038">
    <property type="term" value="F:quinone binding"/>
    <property type="evidence" value="ECO:0007669"/>
    <property type="project" value="UniProtKB-KW"/>
</dbReference>
<dbReference type="GO" id="GO:0019684">
    <property type="term" value="P:photosynthesis, light reaction"/>
    <property type="evidence" value="ECO:0007669"/>
    <property type="project" value="UniProtKB-UniRule"/>
</dbReference>
<dbReference type="Gene3D" id="3.30.70.3270">
    <property type="match status" value="1"/>
</dbReference>
<dbReference type="HAMAP" id="MF_01351">
    <property type="entry name" value="NDH1_NuoI"/>
    <property type="match status" value="1"/>
</dbReference>
<dbReference type="InterPro" id="IPR017896">
    <property type="entry name" value="4Fe4S_Fe-S-bd"/>
</dbReference>
<dbReference type="InterPro" id="IPR017900">
    <property type="entry name" value="4Fe4S_Fe_S_CS"/>
</dbReference>
<dbReference type="InterPro" id="IPR010226">
    <property type="entry name" value="NADH_quinone_OxRdtase_chainI"/>
</dbReference>
<dbReference type="InterPro" id="IPR004497">
    <property type="entry name" value="NDHI"/>
</dbReference>
<dbReference type="NCBIfam" id="TIGR00403">
    <property type="entry name" value="ndhI"/>
    <property type="match status" value="1"/>
</dbReference>
<dbReference type="NCBIfam" id="TIGR01971">
    <property type="entry name" value="NuoI"/>
    <property type="match status" value="1"/>
</dbReference>
<dbReference type="NCBIfam" id="NF004537">
    <property type="entry name" value="PRK05888.1-3"/>
    <property type="match status" value="1"/>
</dbReference>
<dbReference type="PANTHER" id="PTHR47275">
    <property type="entry name" value="NAD(P)H-QUINONE OXIDOREDUCTASE SUBUNIT I, CHLOROPLASTIC"/>
    <property type="match status" value="1"/>
</dbReference>
<dbReference type="PANTHER" id="PTHR47275:SF1">
    <property type="entry name" value="NAD(P)H-QUINONE OXIDOREDUCTASE SUBUNIT I, CHLOROPLASTIC"/>
    <property type="match status" value="1"/>
</dbReference>
<dbReference type="Pfam" id="PF12838">
    <property type="entry name" value="Fer4_7"/>
    <property type="match status" value="1"/>
</dbReference>
<dbReference type="SUPFAM" id="SSF54862">
    <property type="entry name" value="4Fe-4S ferredoxins"/>
    <property type="match status" value="1"/>
</dbReference>
<dbReference type="PROSITE" id="PS00198">
    <property type="entry name" value="4FE4S_FER_1"/>
    <property type="match status" value="2"/>
</dbReference>
<dbReference type="PROSITE" id="PS51379">
    <property type="entry name" value="4FE4S_FER_2"/>
    <property type="match status" value="2"/>
</dbReference>
<feature type="chain" id="PRO_0000298554" description="NAD(P)H-quinone oxidoreductase subunit I">
    <location>
        <begin position="1"/>
        <end position="218"/>
    </location>
</feature>
<feature type="domain" description="4Fe-4S ferredoxin-type 1" evidence="1">
    <location>
        <begin position="55"/>
        <end position="84"/>
    </location>
</feature>
<feature type="domain" description="4Fe-4S ferredoxin-type 2" evidence="1">
    <location>
        <begin position="95"/>
        <end position="124"/>
    </location>
</feature>
<feature type="region of interest" description="Disordered" evidence="2">
    <location>
        <begin position="168"/>
        <end position="218"/>
    </location>
</feature>
<feature type="compositionally biased region" description="Polar residues" evidence="2">
    <location>
        <begin position="208"/>
        <end position="218"/>
    </location>
</feature>
<feature type="binding site" evidence="1">
    <location>
        <position position="64"/>
    </location>
    <ligand>
        <name>[4Fe-4S] cluster</name>
        <dbReference type="ChEBI" id="CHEBI:49883"/>
        <label>1</label>
    </ligand>
</feature>
<feature type="binding site" evidence="1">
    <location>
        <position position="67"/>
    </location>
    <ligand>
        <name>[4Fe-4S] cluster</name>
        <dbReference type="ChEBI" id="CHEBI:49883"/>
        <label>1</label>
    </ligand>
</feature>
<feature type="binding site" evidence="1">
    <location>
        <position position="70"/>
    </location>
    <ligand>
        <name>[4Fe-4S] cluster</name>
        <dbReference type="ChEBI" id="CHEBI:49883"/>
        <label>1</label>
    </ligand>
</feature>
<feature type="binding site" evidence="1">
    <location>
        <position position="74"/>
    </location>
    <ligand>
        <name>[4Fe-4S] cluster</name>
        <dbReference type="ChEBI" id="CHEBI:49883"/>
        <label>2</label>
    </ligand>
</feature>
<feature type="binding site" evidence="1">
    <location>
        <position position="104"/>
    </location>
    <ligand>
        <name>[4Fe-4S] cluster</name>
        <dbReference type="ChEBI" id="CHEBI:49883"/>
        <label>2</label>
    </ligand>
</feature>
<feature type="binding site" evidence="1">
    <location>
        <position position="107"/>
    </location>
    <ligand>
        <name>[4Fe-4S] cluster</name>
        <dbReference type="ChEBI" id="CHEBI:49883"/>
        <label>2</label>
    </ligand>
</feature>
<feature type="binding site" evidence="1">
    <location>
        <position position="110"/>
    </location>
    <ligand>
        <name>[4Fe-4S] cluster</name>
        <dbReference type="ChEBI" id="CHEBI:49883"/>
        <label>2</label>
    </ligand>
</feature>
<feature type="binding site" evidence="1">
    <location>
        <position position="114"/>
    </location>
    <ligand>
        <name>[4Fe-4S] cluster</name>
        <dbReference type="ChEBI" id="CHEBI:49883"/>
        <label>1</label>
    </ligand>
</feature>
<protein>
    <recommendedName>
        <fullName evidence="1">NAD(P)H-quinone oxidoreductase subunit I</fullName>
        <ecNumber evidence="1">7.1.1.-</ecNumber>
    </recommendedName>
    <alternativeName>
        <fullName evidence="1">NAD(P)H dehydrogenase I subunit I</fullName>
    </alternativeName>
    <alternativeName>
        <fullName evidence="1">NDH-1 subunit I</fullName>
        <shortName evidence="1">NDH-I</shortName>
    </alternativeName>
</protein>
<evidence type="ECO:0000255" key="1">
    <source>
        <dbReference type="HAMAP-Rule" id="MF_01351"/>
    </source>
</evidence>
<evidence type="ECO:0000256" key="2">
    <source>
        <dbReference type="SAM" id="MobiDB-lite"/>
    </source>
</evidence>
<proteinExistence type="inferred from homology"/>
<comment type="function">
    <text evidence="1">NDH-1 shuttles electrons from an unknown electron donor, via FMN and iron-sulfur (Fe-S) centers, to quinones in the respiratory and/or the photosynthetic chain. The immediate electron acceptor for the enzyme in this species is believed to be plastoquinone. Couples the redox reaction to proton translocation, and thus conserves the redox energy in a proton gradient.</text>
</comment>
<comment type="catalytic activity">
    <reaction evidence="1">
        <text>a plastoquinone + NADH + (n+1) H(+)(in) = a plastoquinol + NAD(+) + n H(+)(out)</text>
        <dbReference type="Rhea" id="RHEA:42608"/>
        <dbReference type="Rhea" id="RHEA-COMP:9561"/>
        <dbReference type="Rhea" id="RHEA-COMP:9562"/>
        <dbReference type="ChEBI" id="CHEBI:15378"/>
        <dbReference type="ChEBI" id="CHEBI:17757"/>
        <dbReference type="ChEBI" id="CHEBI:57540"/>
        <dbReference type="ChEBI" id="CHEBI:57945"/>
        <dbReference type="ChEBI" id="CHEBI:62192"/>
    </reaction>
</comment>
<comment type="catalytic activity">
    <reaction evidence="1">
        <text>a plastoquinone + NADPH + (n+1) H(+)(in) = a plastoquinol + NADP(+) + n H(+)(out)</text>
        <dbReference type="Rhea" id="RHEA:42612"/>
        <dbReference type="Rhea" id="RHEA-COMP:9561"/>
        <dbReference type="Rhea" id="RHEA-COMP:9562"/>
        <dbReference type="ChEBI" id="CHEBI:15378"/>
        <dbReference type="ChEBI" id="CHEBI:17757"/>
        <dbReference type="ChEBI" id="CHEBI:57783"/>
        <dbReference type="ChEBI" id="CHEBI:58349"/>
        <dbReference type="ChEBI" id="CHEBI:62192"/>
    </reaction>
</comment>
<comment type="cofactor">
    <cofactor evidence="1">
        <name>[4Fe-4S] cluster</name>
        <dbReference type="ChEBI" id="CHEBI:49883"/>
    </cofactor>
    <text evidence="1">Binds 2 [4Fe-4S] clusters per subunit.</text>
</comment>
<comment type="subunit">
    <text evidence="1">NDH-1 is composed of at least 11 different subunits.</text>
</comment>
<comment type="subcellular location">
    <subcellularLocation>
        <location evidence="1">Cellular thylakoid membrane</location>
        <topology evidence="1">Peripheral membrane protein</topology>
    </subcellularLocation>
</comment>
<comment type="similarity">
    <text evidence="1">Belongs to the complex I 23 kDa subunit family.</text>
</comment>
<keyword id="KW-0004">4Fe-4S</keyword>
<keyword id="KW-0408">Iron</keyword>
<keyword id="KW-0411">Iron-sulfur</keyword>
<keyword id="KW-0472">Membrane</keyword>
<keyword id="KW-0479">Metal-binding</keyword>
<keyword id="KW-0520">NAD</keyword>
<keyword id="KW-0521">NADP</keyword>
<keyword id="KW-0618">Plastoquinone</keyword>
<keyword id="KW-0874">Quinone</keyword>
<keyword id="KW-1185">Reference proteome</keyword>
<keyword id="KW-0677">Repeat</keyword>
<keyword id="KW-0793">Thylakoid</keyword>
<keyword id="KW-1278">Translocase</keyword>
<organism>
    <name type="scientific">Synechococcus sp. (strain WH7803)</name>
    <dbReference type="NCBI Taxonomy" id="32051"/>
    <lineage>
        <taxon>Bacteria</taxon>
        <taxon>Bacillati</taxon>
        <taxon>Cyanobacteriota</taxon>
        <taxon>Cyanophyceae</taxon>
        <taxon>Synechococcales</taxon>
        <taxon>Synechococcaceae</taxon>
        <taxon>Synechococcus</taxon>
    </lineage>
</organism>
<gene>
    <name evidence="1" type="primary">ndhI</name>
    <name type="ordered locus">SynWH7803_2290</name>
</gene>
<sequence>MFGFLKQVGDYTRDAVDAARNLTQGLAVTFDHMKRRPVTVQYPYEKLIPSERYRGRIHYEFDKCIACEVCVRVCPINLPVVDWVMNKETKKKELRNYSIDFGVCIFCGNCVEYCPTNCLSMTEEYELAAFDRHSLNFDNVALGRLPTSVTTDPAVQPLRELAYLPAGEVQPHGVDPSRPRAGQRPDQVLSSLKQNAGGSAGNEGESATSTNTSKGSAE</sequence>